<sequence length="233" mass="25591">VIGGDECNINEHPFLVLVYYDEYQCGGTLINEEWVLTAAHCDGENMEIHLGMHSKKVPNKDRRRRVPKEKFFCDSSKNYTKWNKDIMLIRLNRPVRKSAHIAPLSLPSSPPSVGSVCRIMGWGTISPTEETYPDVPHCANINLLDYEVCRAAYPELPATSRTLCAGILEGGKDSCGGDSGGPLICNGQFQGIVSWGGDPCAQPHEPGSYTNVFDHLDWIKGIIAGNTDATCPL</sequence>
<reference evidence="7" key="1">
    <citation type="journal article" date="2004" name="Toxicon">
        <title>Amino acid sequence of a thrombin-like enzyme, elegaxobin II, from the venom of Trimeresurus elegans (Sakishima-Habu).</title>
        <authorList>
            <person name="Oyama E."/>
            <person name="Takahashi H."/>
        </authorList>
    </citation>
    <scope>PROTEIN SEQUENCE</scope>
    <scope>SUBCELLULAR LOCATION</scope>
    <scope>TISSUE SPECIFICITY</scope>
    <source>
        <tissue evidence="6">Venom</tissue>
    </source>
</reference>
<reference evidence="7" key="2">
    <citation type="journal article" date="2003" name="Toxicon">
        <title>Purification and characterization of a thrombin-like enzyme, elegaxobin II, with Lys-bradykinin releasing activity from the venom of Trimeresurus elegans (Sakishima-Habu).</title>
        <authorList>
            <person name="Oyama E."/>
            <person name="Takahashi H."/>
        </authorList>
    </citation>
    <scope>FUNCTION</scope>
    <scope>SUBUNIT</scope>
    <scope>SUBCELLULAR LOCATION</scope>
    <scope>TISSUE SPECIFICITY</scope>
</reference>
<keyword id="KW-1204">Blood coagulation cascade activating toxin</keyword>
<keyword id="KW-0903">Direct protein sequencing</keyword>
<keyword id="KW-1015">Disulfide bond</keyword>
<keyword id="KW-0325">Glycoprotein</keyword>
<keyword id="KW-1199">Hemostasis impairing toxin</keyword>
<keyword id="KW-0378">Hydrolase</keyword>
<keyword id="KW-0382">Hypotensive agent</keyword>
<keyword id="KW-0645">Protease</keyword>
<keyword id="KW-0964">Secreted</keyword>
<keyword id="KW-0720">Serine protease</keyword>
<keyword id="KW-0800">Toxin</keyword>
<comment type="function">
    <text evidence="5">Thrombin-like snake venom serine protease that clots rabbit fibrinogen. Only the beta chain of fibrinogen (FGB) is cleaved, releasing fibrinopeptide B. Human and bovine fibrinogen are unaffected. Also cleaves Met-Lys and Arg-Ser bonds in heat-denatured bovine plasma kininogen to release Lys-bradykinin.</text>
</comment>
<comment type="subunit">
    <text evidence="5">Monomer.</text>
</comment>
<comment type="subcellular location">
    <subcellularLocation>
        <location evidence="5 6">Secreted</location>
    </subcellularLocation>
</comment>
<comment type="tissue specificity">
    <text evidence="5 6">Expressed by the venom gland.</text>
</comment>
<comment type="similarity">
    <text evidence="4">Belongs to the peptidase S1 family. Snake venom subfamily.</text>
</comment>
<accession>P84787</accession>
<name>VSP2_PROEL</name>
<proteinExistence type="evidence at protein level"/>
<protein>
    <recommendedName>
        <fullName>Thrombin-like enzyme elegaxobin-2</fullName>
        <shortName>SVTLE</shortName>
        <ecNumber>3.4.21.-</ecNumber>
    </recommendedName>
    <alternativeName>
        <fullName>Elegaxobin II</fullName>
    </alternativeName>
    <alternativeName>
        <fullName>Fibrinogen-clotting enzyme</fullName>
    </alternativeName>
    <alternativeName>
        <fullName>Snake venom serine protease</fullName>
        <shortName>SVSP</shortName>
    </alternativeName>
</protein>
<organism>
    <name type="scientific">Protobothrops elegans</name>
    <name type="common">Elegant pitviper</name>
    <name type="synonym">Trimeresurus elegans</name>
    <dbReference type="NCBI Taxonomy" id="88086"/>
    <lineage>
        <taxon>Eukaryota</taxon>
        <taxon>Metazoa</taxon>
        <taxon>Chordata</taxon>
        <taxon>Craniata</taxon>
        <taxon>Vertebrata</taxon>
        <taxon>Euteleostomi</taxon>
        <taxon>Lepidosauria</taxon>
        <taxon>Squamata</taxon>
        <taxon>Bifurcata</taxon>
        <taxon>Unidentata</taxon>
        <taxon>Episquamata</taxon>
        <taxon>Toxicofera</taxon>
        <taxon>Serpentes</taxon>
        <taxon>Colubroidea</taxon>
        <taxon>Viperidae</taxon>
        <taxon>Crotalinae</taxon>
        <taxon>Protobothrops</taxon>
    </lineage>
</organism>
<evidence type="ECO:0000250" key="1">
    <source>
        <dbReference type="UniProtKB" id="P12544"/>
    </source>
</evidence>
<evidence type="ECO:0000250" key="2">
    <source>
        <dbReference type="UniProtKB" id="Q9PSN3"/>
    </source>
</evidence>
<evidence type="ECO:0000255" key="3"/>
<evidence type="ECO:0000255" key="4">
    <source>
        <dbReference type="PROSITE-ProRule" id="PRU00274"/>
    </source>
</evidence>
<evidence type="ECO:0000269" key="5">
    <source>
    </source>
</evidence>
<evidence type="ECO:0000269" key="6">
    <source>
    </source>
</evidence>
<evidence type="ECO:0000305" key="7"/>
<feature type="chain" id="PRO_0000227536" description="Thrombin-like enzyme elegaxobin-2">
    <location>
        <begin position="1"/>
        <end position="233"/>
    </location>
</feature>
<feature type="domain" description="Peptidase S1" evidence="4">
    <location>
        <begin position="1"/>
        <end position="224"/>
    </location>
</feature>
<feature type="active site" description="Charge relay system" evidence="1">
    <location>
        <position position="40"/>
    </location>
</feature>
<feature type="active site" description="Charge relay system" evidence="1">
    <location>
        <position position="85"/>
    </location>
</feature>
<feature type="active site" description="Charge relay system" evidence="1">
    <location>
        <position position="179"/>
    </location>
</feature>
<feature type="glycosylation site" description="N-linked (GlcNAc...) asparagine" evidence="3">
    <location>
        <position position="78"/>
    </location>
</feature>
<feature type="disulfide bond" evidence="2 4">
    <location>
        <begin position="7"/>
        <end position="138"/>
    </location>
</feature>
<feature type="disulfide bond" evidence="2 4">
    <location>
        <begin position="25"/>
        <end position="41"/>
    </location>
</feature>
<feature type="disulfide bond" evidence="2 4">
    <location>
        <begin position="73"/>
        <end position="231"/>
    </location>
</feature>
<feature type="disulfide bond" evidence="2 4">
    <location>
        <begin position="117"/>
        <end position="185"/>
    </location>
</feature>
<feature type="disulfide bond" evidence="2 4">
    <location>
        <begin position="149"/>
        <end position="164"/>
    </location>
</feature>
<feature type="disulfide bond" evidence="2 4">
    <location>
        <begin position="175"/>
        <end position="200"/>
    </location>
</feature>
<dbReference type="EC" id="3.4.21.-"/>
<dbReference type="SMR" id="P84787"/>
<dbReference type="GO" id="GO:0005576">
    <property type="term" value="C:extracellular region"/>
    <property type="evidence" value="ECO:0000314"/>
    <property type="project" value="UniProtKB"/>
</dbReference>
<dbReference type="GO" id="GO:0030141">
    <property type="term" value="C:secretory granule"/>
    <property type="evidence" value="ECO:0007669"/>
    <property type="project" value="TreeGrafter"/>
</dbReference>
<dbReference type="GO" id="GO:0004252">
    <property type="term" value="F:serine-type endopeptidase activity"/>
    <property type="evidence" value="ECO:0000314"/>
    <property type="project" value="UniProtKB"/>
</dbReference>
<dbReference type="GO" id="GO:0090729">
    <property type="term" value="F:toxin activity"/>
    <property type="evidence" value="ECO:0000314"/>
    <property type="project" value="UniProtKB"/>
</dbReference>
<dbReference type="GO" id="GO:0006508">
    <property type="term" value="P:proteolysis"/>
    <property type="evidence" value="ECO:0007669"/>
    <property type="project" value="UniProtKB-KW"/>
</dbReference>
<dbReference type="GO" id="GO:0008217">
    <property type="term" value="P:regulation of blood pressure"/>
    <property type="evidence" value="ECO:0007669"/>
    <property type="project" value="UniProtKB-KW"/>
</dbReference>
<dbReference type="GO" id="GO:0044485">
    <property type="term" value="P:venom-mediated fibrinogenolysis in another organism"/>
    <property type="evidence" value="ECO:0000314"/>
    <property type="project" value="UniProtKB"/>
</dbReference>
<dbReference type="GO" id="GO:0044470">
    <property type="term" value="P:venom-mediated suppression of blood coagulation"/>
    <property type="evidence" value="ECO:0000314"/>
    <property type="project" value="UniProtKB"/>
</dbReference>
<dbReference type="CDD" id="cd00190">
    <property type="entry name" value="Tryp_SPc"/>
    <property type="match status" value="1"/>
</dbReference>
<dbReference type="FunFam" id="2.40.10.10:FF:000158">
    <property type="entry name" value="Thrombin-like enzyme saxthrombin"/>
    <property type="match status" value="1"/>
</dbReference>
<dbReference type="FunFam" id="2.40.10.10:FF:000153">
    <property type="entry name" value="Venom plasminogen activator TSV-PA"/>
    <property type="match status" value="1"/>
</dbReference>
<dbReference type="Gene3D" id="2.40.10.10">
    <property type="entry name" value="Trypsin-like serine proteases"/>
    <property type="match status" value="2"/>
</dbReference>
<dbReference type="InterPro" id="IPR009003">
    <property type="entry name" value="Peptidase_S1_PA"/>
</dbReference>
<dbReference type="InterPro" id="IPR043504">
    <property type="entry name" value="Peptidase_S1_PA_chymotrypsin"/>
</dbReference>
<dbReference type="InterPro" id="IPR001314">
    <property type="entry name" value="Peptidase_S1A"/>
</dbReference>
<dbReference type="InterPro" id="IPR001254">
    <property type="entry name" value="Trypsin_dom"/>
</dbReference>
<dbReference type="InterPro" id="IPR018114">
    <property type="entry name" value="TRYPSIN_HIS"/>
</dbReference>
<dbReference type="InterPro" id="IPR033116">
    <property type="entry name" value="TRYPSIN_SER"/>
</dbReference>
<dbReference type="PANTHER" id="PTHR24271:SF47">
    <property type="entry name" value="KALLIKREIN-1"/>
    <property type="match status" value="1"/>
</dbReference>
<dbReference type="PANTHER" id="PTHR24271">
    <property type="entry name" value="KALLIKREIN-RELATED"/>
    <property type="match status" value="1"/>
</dbReference>
<dbReference type="Pfam" id="PF00089">
    <property type="entry name" value="Trypsin"/>
    <property type="match status" value="1"/>
</dbReference>
<dbReference type="PRINTS" id="PR00722">
    <property type="entry name" value="CHYMOTRYPSIN"/>
</dbReference>
<dbReference type="SMART" id="SM00020">
    <property type="entry name" value="Tryp_SPc"/>
    <property type="match status" value="1"/>
</dbReference>
<dbReference type="SUPFAM" id="SSF50494">
    <property type="entry name" value="Trypsin-like serine proteases"/>
    <property type="match status" value="1"/>
</dbReference>
<dbReference type="PROSITE" id="PS50240">
    <property type="entry name" value="TRYPSIN_DOM"/>
    <property type="match status" value="1"/>
</dbReference>
<dbReference type="PROSITE" id="PS00134">
    <property type="entry name" value="TRYPSIN_HIS"/>
    <property type="match status" value="1"/>
</dbReference>
<dbReference type="PROSITE" id="PS00135">
    <property type="entry name" value="TRYPSIN_SER"/>
    <property type="match status" value="1"/>
</dbReference>